<organism>
    <name type="scientific">Arabidopsis thaliana</name>
    <name type="common">Mouse-ear cress</name>
    <dbReference type="NCBI Taxonomy" id="3702"/>
    <lineage>
        <taxon>Eukaryota</taxon>
        <taxon>Viridiplantae</taxon>
        <taxon>Streptophyta</taxon>
        <taxon>Embryophyta</taxon>
        <taxon>Tracheophyta</taxon>
        <taxon>Spermatophyta</taxon>
        <taxon>Magnoliopsida</taxon>
        <taxon>eudicotyledons</taxon>
        <taxon>Gunneridae</taxon>
        <taxon>Pentapetalae</taxon>
        <taxon>rosids</taxon>
        <taxon>malvids</taxon>
        <taxon>Brassicales</taxon>
        <taxon>Brassicaceae</taxon>
        <taxon>Camelineae</taxon>
        <taxon>Arabidopsis</taxon>
    </lineage>
</organism>
<keyword id="KW-0150">Chloroplast</keyword>
<keyword id="KW-0934">Plastid</keyword>
<keyword id="KW-1185">Reference proteome</keyword>
<keyword id="KW-0809">Transit peptide</keyword>
<reference key="1">
    <citation type="journal article" date="1999" name="Nature">
        <title>Sequence and analysis of chromosome 4 of the plant Arabidopsis thaliana.</title>
        <authorList>
            <person name="Mayer K.F.X."/>
            <person name="Schueller C."/>
            <person name="Wambutt R."/>
            <person name="Murphy G."/>
            <person name="Volckaert G."/>
            <person name="Pohl T."/>
            <person name="Duesterhoeft A."/>
            <person name="Stiekema W."/>
            <person name="Entian K.-D."/>
            <person name="Terryn N."/>
            <person name="Harris B."/>
            <person name="Ansorge W."/>
            <person name="Brandt P."/>
            <person name="Grivell L.A."/>
            <person name="Rieger M."/>
            <person name="Weichselgartner M."/>
            <person name="de Simone V."/>
            <person name="Obermaier B."/>
            <person name="Mache R."/>
            <person name="Mueller M."/>
            <person name="Kreis M."/>
            <person name="Delseny M."/>
            <person name="Puigdomenech P."/>
            <person name="Watson M."/>
            <person name="Schmidtheini T."/>
            <person name="Reichert B."/>
            <person name="Portetelle D."/>
            <person name="Perez-Alonso M."/>
            <person name="Boutry M."/>
            <person name="Bancroft I."/>
            <person name="Vos P."/>
            <person name="Hoheisel J."/>
            <person name="Zimmermann W."/>
            <person name="Wedler H."/>
            <person name="Ridley P."/>
            <person name="Langham S.-A."/>
            <person name="McCullagh B."/>
            <person name="Bilham L."/>
            <person name="Robben J."/>
            <person name="van der Schueren J."/>
            <person name="Grymonprez B."/>
            <person name="Chuang Y.-J."/>
            <person name="Vandenbussche F."/>
            <person name="Braeken M."/>
            <person name="Weltjens I."/>
            <person name="Voet M."/>
            <person name="Bastiaens I."/>
            <person name="Aert R."/>
            <person name="Defoor E."/>
            <person name="Weitzenegger T."/>
            <person name="Bothe G."/>
            <person name="Ramsperger U."/>
            <person name="Hilbert H."/>
            <person name="Braun M."/>
            <person name="Holzer E."/>
            <person name="Brandt A."/>
            <person name="Peters S."/>
            <person name="van Staveren M."/>
            <person name="Dirkse W."/>
            <person name="Mooijman P."/>
            <person name="Klein Lankhorst R."/>
            <person name="Rose M."/>
            <person name="Hauf J."/>
            <person name="Koetter P."/>
            <person name="Berneiser S."/>
            <person name="Hempel S."/>
            <person name="Feldpausch M."/>
            <person name="Lamberth S."/>
            <person name="Van den Daele H."/>
            <person name="De Keyser A."/>
            <person name="Buysshaert C."/>
            <person name="Gielen J."/>
            <person name="Villarroel R."/>
            <person name="De Clercq R."/>
            <person name="van Montagu M."/>
            <person name="Rogers J."/>
            <person name="Cronin A."/>
            <person name="Quail M.A."/>
            <person name="Bray-Allen S."/>
            <person name="Clark L."/>
            <person name="Doggett J."/>
            <person name="Hall S."/>
            <person name="Kay M."/>
            <person name="Lennard N."/>
            <person name="McLay K."/>
            <person name="Mayes R."/>
            <person name="Pettett A."/>
            <person name="Rajandream M.A."/>
            <person name="Lyne M."/>
            <person name="Benes V."/>
            <person name="Rechmann S."/>
            <person name="Borkova D."/>
            <person name="Bloecker H."/>
            <person name="Scharfe M."/>
            <person name="Grimm M."/>
            <person name="Loehnert T.-H."/>
            <person name="Dose S."/>
            <person name="de Haan M."/>
            <person name="Maarse A.C."/>
            <person name="Schaefer M."/>
            <person name="Mueller-Auer S."/>
            <person name="Gabel C."/>
            <person name="Fuchs M."/>
            <person name="Fartmann B."/>
            <person name="Granderath K."/>
            <person name="Dauner D."/>
            <person name="Herzl A."/>
            <person name="Neumann S."/>
            <person name="Argiriou A."/>
            <person name="Vitale D."/>
            <person name="Liguori R."/>
            <person name="Piravandi E."/>
            <person name="Massenet O."/>
            <person name="Quigley F."/>
            <person name="Clabauld G."/>
            <person name="Muendlein A."/>
            <person name="Felber R."/>
            <person name="Schnabl S."/>
            <person name="Hiller R."/>
            <person name="Schmidt W."/>
            <person name="Lecharny A."/>
            <person name="Aubourg S."/>
            <person name="Chefdor F."/>
            <person name="Cooke R."/>
            <person name="Berger C."/>
            <person name="Monfort A."/>
            <person name="Casacuberta E."/>
            <person name="Gibbons T."/>
            <person name="Weber N."/>
            <person name="Vandenbol M."/>
            <person name="Bargues M."/>
            <person name="Terol J."/>
            <person name="Torres A."/>
            <person name="Perez-Perez A."/>
            <person name="Purnelle B."/>
            <person name="Bent E."/>
            <person name="Johnson S."/>
            <person name="Tacon D."/>
            <person name="Jesse T."/>
            <person name="Heijnen L."/>
            <person name="Schwarz S."/>
            <person name="Scholler P."/>
            <person name="Heber S."/>
            <person name="Francs P."/>
            <person name="Bielke C."/>
            <person name="Frishman D."/>
            <person name="Haase D."/>
            <person name="Lemcke K."/>
            <person name="Mewes H.-W."/>
            <person name="Stocker S."/>
            <person name="Zaccaria P."/>
            <person name="Bevan M."/>
            <person name="Wilson R.K."/>
            <person name="de la Bastide M."/>
            <person name="Habermann K."/>
            <person name="Parnell L."/>
            <person name="Dedhia N."/>
            <person name="Gnoj L."/>
            <person name="Schutz K."/>
            <person name="Huang E."/>
            <person name="Spiegel L."/>
            <person name="Sekhon M."/>
            <person name="Murray J."/>
            <person name="Sheet P."/>
            <person name="Cordes M."/>
            <person name="Abu-Threideh J."/>
            <person name="Stoneking T."/>
            <person name="Kalicki J."/>
            <person name="Graves T."/>
            <person name="Harmon G."/>
            <person name="Edwards J."/>
            <person name="Latreille P."/>
            <person name="Courtney L."/>
            <person name="Cloud J."/>
            <person name="Abbott A."/>
            <person name="Scott K."/>
            <person name="Johnson D."/>
            <person name="Minx P."/>
            <person name="Bentley D."/>
            <person name="Fulton B."/>
            <person name="Miller N."/>
            <person name="Greco T."/>
            <person name="Kemp K."/>
            <person name="Kramer J."/>
            <person name="Fulton L."/>
            <person name="Mardis E."/>
            <person name="Dante M."/>
            <person name="Pepin K."/>
            <person name="Hillier L.W."/>
            <person name="Nelson J."/>
            <person name="Spieth J."/>
            <person name="Ryan E."/>
            <person name="Andrews S."/>
            <person name="Geisel C."/>
            <person name="Layman D."/>
            <person name="Du H."/>
            <person name="Ali J."/>
            <person name="Berghoff A."/>
            <person name="Jones K."/>
            <person name="Drone K."/>
            <person name="Cotton M."/>
            <person name="Joshu C."/>
            <person name="Antonoiu B."/>
            <person name="Zidanic M."/>
            <person name="Strong C."/>
            <person name="Sun H."/>
            <person name="Lamar B."/>
            <person name="Yordan C."/>
            <person name="Ma P."/>
            <person name="Zhong J."/>
            <person name="Preston R."/>
            <person name="Vil D."/>
            <person name="Shekher M."/>
            <person name="Matero A."/>
            <person name="Shah R."/>
            <person name="Swaby I.K."/>
            <person name="O'Shaughnessy A."/>
            <person name="Rodriguez M."/>
            <person name="Hoffman J."/>
            <person name="Till S."/>
            <person name="Granat S."/>
            <person name="Shohdy N."/>
            <person name="Hasegawa A."/>
            <person name="Hameed A."/>
            <person name="Lodhi M."/>
            <person name="Johnson A."/>
            <person name="Chen E."/>
            <person name="Marra M.A."/>
            <person name="Martienssen R."/>
            <person name="McCombie W.R."/>
        </authorList>
    </citation>
    <scope>NUCLEOTIDE SEQUENCE [LARGE SCALE GENOMIC DNA]</scope>
    <source>
        <strain>cv. Columbia</strain>
    </source>
</reference>
<reference key="2">
    <citation type="journal article" date="2017" name="Plant J.">
        <title>Araport11: a complete reannotation of the Arabidopsis thaliana reference genome.</title>
        <authorList>
            <person name="Cheng C.Y."/>
            <person name="Krishnakumar V."/>
            <person name="Chan A.P."/>
            <person name="Thibaud-Nissen F."/>
            <person name="Schobel S."/>
            <person name="Town C.D."/>
        </authorList>
    </citation>
    <scope>GENOME REANNOTATION</scope>
    <source>
        <strain>cv. Columbia</strain>
    </source>
</reference>
<reference key="3">
    <citation type="journal article" date="2003" name="Science">
        <title>Empirical analysis of transcriptional activity in the Arabidopsis genome.</title>
        <authorList>
            <person name="Yamada K."/>
            <person name="Lim J."/>
            <person name="Dale J.M."/>
            <person name="Chen H."/>
            <person name="Shinn P."/>
            <person name="Palm C.J."/>
            <person name="Southwick A.M."/>
            <person name="Wu H.C."/>
            <person name="Kim C.J."/>
            <person name="Nguyen M."/>
            <person name="Pham P.K."/>
            <person name="Cheuk R.F."/>
            <person name="Karlin-Newmann G."/>
            <person name="Liu S.X."/>
            <person name="Lam B."/>
            <person name="Sakano H."/>
            <person name="Wu T."/>
            <person name="Yu G."/>
            <person name="Miranda M."/>
            <person name="Quach H.L."/>
            <person name="Tripp M."/>
            <person name="Chang C.H."/>
            <person name="Lee J.M."/>
            <person name="Toriumi M.J."/>
            <person name="Chan M.M."/>
            <person name="Tang C.C."/>
            <person name="Onodera C.S."/>
            <person name="Deng J.M."/>
            <person name="Akiyama K."/>
            <person name="Ansari Y."/>
            <person name="Arakawa T."/>
            <person name="Banh J."/>
            <person name="Banno F."/>
            <person name="Bowser L."/>
            <person name="Brooks S.Y."/>
            <person name="Carninci P."/>
            <person name="Chao Q."/>
            <person name="Choy N."/>
            <person name="Enju A."/>
            <person name="Goldsmith A.D."/>
            <person name="Gurjal M."/>
            <person name="Hansen N.F."/>
            <person name="Hayashizaki Y."/>
            <person name="Johnson-Hopson C."/>
            <person name="Hsuan V.W."/>
            <person name="Iida K."/>
            <person name="Karnes M."/>
            <person name="Khan S."/>
            <person name="Koesema E."/>
            <person name="Ishida J."/>
            <person name="Jiang P.X."/>
            <person name="Jones T."/>
            <person name="Kawai J."/>
            <person name="Kamiya A."/>
            <person name="Meyers C."/>
            <person name="Nakajima M."/>
            <person name="Narusaka M."/>
            <person name="Seki M."/>
            <person name="Sakurai T."/>
            <person name="Satou M."/>
            <person name="Tamse R."/>
            <person name="Vaysberg M."/>
            <person name="Wallender E.K."/>
            <person name="Wong C."/>
            <person name="Yamamura Y."/>
            <person name="Yuan S."/>
            <person name="Shinozaki K."/>
            <person name="Davis R.W."/>
            <person name="Theologis A."/>
            <person name="Ecker J.R."/>
        </authorList>
    </citation>
    <scope>NUCLEOTIDE SEQUENCE [LARGE SCALE MRNA]</scope>
    <source>
        <strain>cv. Columbia</strain>
    </source>
</reference>
<reference key="4">
    <citation type="journal article" date="2001" name="Genes Dev.">
        <title>A plastidic ABC protein involved in intercompartmental communication of light signaling.</title>
        <authorList>
            <person name="Moeller S.G."/>
            <person name="Kunkel T."/>
            <person name="Chua N.-H."/>
        </authorList>
    </citation>
    <scope>IDENTIFICATION</scope>
    <scope>FUNCTION</scope>
    <scope>SUBCELLULAR LOCATION</scope>
    <scope>INDUCTION</scope>
    <scope>DISRUPTION PHENOTYPE</scope>
</reference>
<reference key="5">
    <citation type="journal article" date="2001" name="J. Biol. Chem.">
        <title>The Arabidopsis thaliana ABC protein superfamily, a complete inventory.</title>
        <authorList>
            <person name="Sanchez-Fernandez R."/>
            <person name="Davies T.G."/>
            <person name="Coleman J.O."/>
            <person name="Rea P.A."/>
        </authorList>
    </citation>
    <scope>GENE FAMILY</scope>
    <scope>NOMENCLATURE</scope>
</reference>
<reference key="6">
    <citation type="journal article" date="2008" name="Trends Plant Sci.">
        <title>Plant ABC proteins - a unified nomenclature and updated inventory.</title>
        <authorList>
            <person name="Verrier P.J."/>
            <person name="Bird D."/>
            <person name="Burla B."/>
            <person name="Dassa E."/>
            <person name="Forestier C."/>
            <person name="Geisler M."/>
            <person name="Klein M."/>
            <person name="Kolukisaoglu H.U."/>
            <person name="Lee Y."/>
            <person name="Martinoia E."/>
            <person name="Murphy A."/>
            <person name="Rea P.A."/>
            <person name="Samuels L."/>
            <person name="Schulz B."/>
            <person name="Spalding E.J."/>
            <person name="Yazaki K."/>
            <person name="Theodoulou F.L."/>
        </authorList>
    </citation>
    <scope>GENE FAMILY</scope>
    <scope>NOMENCLATURE</scope>
</reference>
<accession>Q9ZS97</accession>
<proteinExistence type="evidence at transcript level"/>
<comment type="function">
    <text evidence="2">Involved in light signaling, probably by mediating the transport and correct distribution of protoporphyrin IX, a chlorophyll precursor, in response to far-red light.</text>
</comment>
<comment type="subcellular location">
    <subcellularLocation>
        <location evidence="2">Plastid</location>
        <location evidence="2">Chloroplast</location>
    </subcellularLocation>
</comment>
<comment type="induction">
    <text evidence="2">By PHYA.</text>
</comment>
<comment type="disruption phenotype">
    <text evidence="2">Plant have an enhanced hypocotyl elongation in far-red light, and accumulates protoporphyrin IX.</text>
</comment>
<comment type="similarity">
    <text evidence="3">Belongs to the iron-sulfur cluster assembly SufBD family.</text>
</comment>
<comment type="caution">
    <text evidence="4">Was originally (PubMed:11346655) thought to belong to the ABC transporter family. Lacks the conserved ABC domain, which is one of the features of the ABC transporter family.</text>
</comment>
<protein>
    <recommendedName>
        <fullName>Iron-sulfur cluster assembly SufBD family protein ABCI8, chloroplastic</fullName>
    </recommendedName>
    <alternativeName>
        <fullName>ABC transporter I family member 8</fullName>
        <shortName>ABC transporter ABCI.8</shortName>
        <shortName>AtABCI8</shortName>
    </alternativeName>
    <alternativeName>
        <fullName>Non-intrinsic ABC protein 1</fullName>
        <shortName>Protein ABC1</shortName>
    </alternativeName>
    <alternativeName>
        <fullName>Plastid sufB-like protein</fullName>
    </alternativeName>
    <alternativeName>
        <fullName>Protein LONG AFTER FAR-RED 6</fullName>
    </alternativeName>
</protein>
<name>AB8I_ARATH</name>
<gene>
    <name type="primary">ABCI8</name>
    <name type="synonym">LAF6</name>
    <name type="synonym">NAP1</name>
    <name type="ordered locus">At4g04770</name>
    <name type="ORF">T4B21.16</name>
</gene>
<evidence type="ECO:0000256" key="1">
    <source>
        <dbReference type="SAM" id="MobiDB-lite"/>
    </source>
</evidence>
<evidence type="ECO:0000269" key="2">
    <source>
    </source>
</evidence>
<evidence type="ECO:0000305" key="3"/>
<evidence type="ECO:0000305" key="4">
    <source>
    </source>
</evidence>
<dbReference type="EMBL" id="AF118223">
    <property type="protein sequence ID" value="AAD03441.1"/>
    <property type="molecule type" value="Genomic_DNA"/>
</dbReference>
<dbReference type="EMBL" id="AL161501">
    <property type="protein sequence ID" value="CAB80842.1"/>
    <property type="molecule type" value="Genomic_DNA"/>
</dbReference>
<dbReference type="EMBL" id="CP002687">
    <property type="protein sequence ID" value="AEE82423.1"/>
    <property type="molecule type" value="Genomic_DNA"/>
</dbReference>
<dbReference type="EMBL" id="AY052195">
    <property type="protein sequence ID" value="AAK97666.1"/>
    <property type="molecule type" value="mRNA"/>
</dbReference>
<dbReference type="EMBL" id="AY056410">
    <property type="protein sequence ID" value="AAL08266.1"/>
    <property type="molecule type" value="mRNA"/>
</dbReference>
<dbReference type="EMBL" id="AY142069">
    <property type="protein sequence ID" value="AAM98333.1"/>
    <property type="molecule type" value="mRNA"/>
</dbReference>
<dbReference type="EMBL" id="BK001497">
    <property type="protein sequence ID" value="DAA01952.1"/>
    <property type="molecule type" value="mRNA"/>
</dbReference>
<dbReference type="PIR" id="A85060">
    <property type="entry name" value="A85060"/>
</dbReference>
<dbReference type="RefSeq" id="NP_192386.1">
    <property type="nucleotide sequence ID" value="NM_116715.5"/>
</dbReference>
<dbReference type="SMR" id="Q9ZS97"/>
<dbReference type="BioGRID" id="11125">
    <property type="interactions" value="2"/>
</dbReference>
<dbReference type="FunCoup" id="Q9ZS97">
    <property type="interactions" value="180"/>
</dbReference>
<dbReference type="IntAct" id="Q9ZS97">
    <property type="interactions" value="2"/>
</dbReference>
<dbReference type="STRING" id="3702.Q9ZS97"/>
<dbReference type="PaxDb" id="3702-AT4G04770.1"/>
<dbReference type="ProteomicsDB" id="244495"/>
<dbReference type="EnsemblPlants" id="AT4G04770.1">
    <property type="protein sequence ID" value="AT4G04770.1"/>
    <property type="gene ID" value="AT4G04770"/>
</dbReference>
<dbReference type="GeneID" id="825814"/>
<dbReference type="Gramene" id="AT4G04770.1">
    <property type="protein sequence ID" value="AT4G04770.1"/>
    <property type="gene ID" value="AT4G04770"/>
</dbReference>
<dbReference type="KEGG" id="ath:AT4G04770"/>
<dbReference type="Araport" id="AT4G04770"/>
<dbReference type="TAIR" id="AT4G04770">
    <property type="gene designation" value="ABCI8"/>
</dbReference>
<dbReference type="eggNOG" id="ENOG502QRGW">
    <property type="taxonomic scope" value="Eukaryota"/>
</dbReference>
<dbReference type="HOGENOM" id="CLU_026231_0_0_1"/>
<dbReference type="InParanoid" id="Q9ZS97"/>
<dbReference type="OMA" id="YYSAPKQ"/>
<dbReference type="PhylomeDB" id="Q9ZS97"/>
<dbReference type="PRO" id="PR:Q9ZS97"/>
<dbReference type="Proteomes" id="UP000006548">
    <property type="component" value="Chromosome 4"/>
</dbReference>
<dbReference type="ExpressionAtlas" id="Q9ZS97">
    <property type="expression patterns" value="baseline and differential"/>
</dbReference>
<dbReference type="GO" id="GO:0009507">
    <property type="term" value="C:chloroplast"/>
    <property type="evidence" value="ECO:0000314"/>
    <property type="project" value="TAIR"/>
</dbReference>
<dbReference type="GO" id="GO:0009570">
    <property type="term" value="C:chloroplast stroma"/>
    <property type="evidence" value="ECO:0007005"/>
    <property type="project" value="TAIR"/>
</dbReference>
<dbReference type="GO" id="GO:0042626">
    <property type="term" value="F:ATPase-coupled transmembrane transporter activity"/>
    <property type="evidence" value="ECO:0000314"/>
    <property type="project" value="TAIR"/>
</dbReference>
<dbReference type="GO" id="GO:0006879">
    <property type="term" value="P:intracellular iron ion homeostasis"/>
    <property type="evidence" value="ECO:0000314"/>
    <property type="project" value="TAIR"/>
</dbReference>
<dbReference type="GO" id="GO:0016226">
    <property type="term" value="P:iron-sulfur cluster assembly"/>
    <property type="evidence" value="ECO:0007669"/>
    <property type="project" value="InterPro"/>
</dbReference>
<dbReference type="GO" id="GO:2000030">
    <property type="term" value="P:regulation of response to red or far red light"/>
    <property type="evidence" value="ECO:0000315"/>
    <property type="project" value="TAIR"/>
</dbReference>
<dbReference type="InterPro" id="IPR055346">
    <property type="entry name" value="Fe-S_cluster_assembly_SufBD"/>
</dbReference>
<dbReference type="InterPro" id="IPR010231">
    <property type="entry name" value="SUF_FeS_clus_asmbl_SufB"/>
</dbReference>
<dbReference type="InterPro" id="IPR000825">
    <property type="entry name" value="SUF_FeS_clus_asmbl_SufBD_core"/>
</dbReference>
<dbReference type="InterPro" id="IPR037284">
    <property type="entry name" value="SUF_FeS_clus_asmbl_SufBD_sf"/>
</dbReference>
<dbReference type="InterPro" id="IPR045595">
    <property type="entry name" value="SufBD_N"/>
</dbReference>
<dbReference type="NCBIfam" id="NF008773">
    <property type="entry name" value="PRK11814.1"/>
    <property type="match status" value="1"/>
</dbReference>
<dbReference type="NCBIfam" id="TIGR01980">
    <property type="entry name" value="sufB"/>
    <property type="match status" value="1"/>
</dbReference>
<dbReference type="PANTHER" id="PTHR30508">
    <property type="entry name" value="FES CLUSTER ASSEMBLY PROTEIN SUF"/>
    <property type="match status" value="1"/>
</dbReference>
<dbReference type="PANTHER" id="PTHR30508:SF1">
    <property type="entry name" value="UPF0051 PROTEIN ABCI8, CHLOROPLASTIC-RELATED"/>
    <property type="match status" value="1"/>
</dbReference>
<dbReference type="Pfam" id="PF01458">
    <property type="entry name" value="SUFBD_core"/>
    <property type="match status" value="1"/>
</dbReference>
<dbReference type="Pfam" id="PF19295">
    <property type="entry name" value="SufBD_N"/>
    <property type="match status" value="1"/>
</dbReference>
<dbReference type="SUPFAM" id="SSF101960">
    <property type="entry name" value="Stabilizer of iron transporter SufD"/>
    <property type="match status" value="1"/>
</dbReference>
<feature type="transit peptide" description="Chloroplast" evidence="3">
    <location>
        <begin position="1"/>
        <end position="52"/>
    </location>
</feature>
<feature type="chain" id="PRO_0000250667" description="Iron-sulfur cluster assembly SufBD family protein ABCI8, chloroplastic">
    <location>
        <begin position="53"/>
        <end position="557"/>
    </location>
</feature>
<feature type="region of interest" description="Disordered" evidence="1">
    <location>
        <begin position="1"/>
        <end position="47"/>
    </location>
</feature>
<feature type="compositionally biased region" description="Low complexity" evidence="1">
    <location>
        <begin position="10"/>
        <end position="24"/>
    </location>
</feature>
<sequence>MASLLANGISSFSPQPTSDSSKSPKGFHPKPESLKFPSPKSLNPTRPIFKLRADVGIDSRPIGASESSSSGTSTVSSTDKLQQYFQNLDYDKKYGFVEDIDSFTIPKGLSEETIRLISKLKEEPDWMLEFRFKAYAKFLKLEEPKWSDNRYPSINFQDMCYYSAPKKKPTLNSLDEVDPQLLEYFDKLGVPLTEQKRLANVAVDAVIDSVSIATTHRKTLEKSGVIFCSISEAIREYPDLIKKYLGRVVPSDDNYYAALNSAVFSDGSFCYIPKNTRCPMPISTYFRINAMETGQFERTLIVAEEGSFVEYLEGCTAPSYDTNQLHAAVVELYCGKGAEIKYSTVQNWYAGDEQGKGGIYNFVTKRGLCAGDRSKISWTQVETGSAITWKYPSVVLEGDDSVGEFYSVALTNNYQQADTGTKMIHKGKNTKSRIISKGISAGHSRNCYRGLVQVQSKAEGAKNTSTCDSMLIGDKAAANTYPYIQVKNPSAKVEHEASTSKIGEDQLFYFQQRGIDHERALAAMISGFCRDVFNKLPDEFGAEVNQLMSIKLEGSVG</sequence>